<sequence length="310" mass="34177">MRVIFMGTPDFSVGTLEAIIEAGHEVALVVTQPDKPKGRGKTMQYTPVKECALSHGIEVFQPVKIRETANIEYLRKFNADIIIVVAFGQILSKSILDMPRYGCINVHASLLPKYRGAAPIQWAVINGDEFTGVTTMRMDEGVDTGDMIAKSTVRLAPDETGGSLFDKLSAEGAKLCVETMKMIEDGTAEYTPQNSEEATHTSMISKELGFIDWTKPAVEIERLIRGLNPWPSAYTHLNGKTFKVWSAKVIDGSDDYEPGCIYHIGKNDMYVQTGKGALSLVEVQLQGKKRMDTGSFLRGCHVEEGSFFTL</sequence>
<protein>
    <recommendedName>
        <fullName evidence="1">Methionyl-tRNA formyltransferase</fullName>
        <ecNumber evidence="1">2.1.2.9</ecNumber>
    </recommendedName>
</protein>
<comment type="function">
    <text evidence="1">Attaches a formyl group to the free amino group of methionyl-tRNA(fMet). The formyl group appears to play a dual role in the initiator identity of N-formylmethionyl-tRNA by promoting its recognition by IF2 and preventing the misappropriation of this tRNA by the elongation apparatus.</text>
</comment>
<comment type="catalytic activity">
    <reaction evidence="1">
        <text>L-methionyl-tRNA(fMet) + (6R)-10-formyltetrahydrofolate = N-formyl-L-methionyl-tRNA(fMet) + (6S)-5,6,7,8-tetrahydrofolate + H(+)</text>
        <dbReference type="Rhea" id="RHEA:24380"/>
        <dbReference type="Rhea" id="RHEA-COMP:9952"/>
        <dbReference type="Rhea" id="RHEA-COMP:9953"/>
        <dbReference type="ChEBI" id="CHEBI:15378"/>
        <dbReference type="ChEBI" id="CHEBI:57453"/>
        <dbReference type="ChEBI" id="CHEBI:78530"/>
        <dbReference type="ChEBI" id="CHEBI:78844"/>
        <dbReference type="ChEBI" id="CHEBI:195366"/>
        <dbReference type="EC" id="2.1.2.9"/>
    </reaction>
</comment>
<comment type="similarity">
    <text evidence="1">Belongs to the Fmt family.</text>
</comment>
<reference key="1">
    <citation type="journal article" date="2009" name="Proc. Natl. Acad. Sci. U.S.A.">
        <title>Characterizing a model human gut microbiota composed of members of its two dominant bacterial phyla.</title>
        <authorList>
            <person name="Mahowald M.A."/>
            <person name="Rey F.E."/>
            <person name="Seedorf H."/>
            <person name="Turnbaugh P.J."/>
            <person name="Fulton R.S."/>
            <person name="Wollam A."/>
            <person name="Shah N."/>
            <person name="Wang C."/>
            <person name="Magrini V."/>
            <person name="Wilson R.K."/>
            <person name="Cantarel B.L."/>
            <person name="Coutinho P.M."/>
            <person name="Henrissat B."/>
            <person name="Crock L.W."/>
            <person name="Russell A."/>
            <person name="Verberkmoes N.C."/>
            <person name="Hettich R.L."/>
            <person name="Gordon J.I."/>
        </authorList>
    </citation>
    <scope>NUCLEOTIDE SEQUENCE [LARGE SCALE GENOMIC DNA]</scope>
    <source>
        <strain>ATCC 33656 / DSM 3377 / JCM 17463 / KCTC 5835 / LMG 30912 / VPI 0990</strain>
    </source>
</reference>
<dbReference type="EC" id="2.1.2.9" evidence="1"/>
<dbReference type="EMBL" id="CP001107">
    <property type="protein sequence ID" value="ACR76079.1"/>
    <property type="molecule type" value="Genomic_DNA"/>
</dbReference>
<dbReference type="RefSeq" id="WP_012743173.1">
    <property type="nucleotide sequence ID" value="NZ_CAXSYD010000016.1"/>
</dbReference>
<dbReference type="SMR" id="C4ZEV8"/>
<dbReference type="STRING" id="515619.EUBREC_2345"/>
<dbReference type="PaxDb" id="515619-EUBREC_2345"/>
<dbReference type="GeneID" id="86989108"/>
<dbReference type="KEGG" id="ere:EUBREC_2345"/>
<dbReference type="HOGENOM" id="CLU_033347_1_1_9"/>
<dbReference type="Proteomes" id="UP000001477">
    <property type="component" value="Chromosome"/>
</dbReference>
<dbReference type="GO" id="GO:0005829">
    <property type="term" value="C:cytosol"/>
    <property type="evidence" value="ECO:0007669"/>
    <property type="project" value="TreeGrafter"/>
</dbReference>
<dbReference type="GO" id="GO:0004479">
    <property type="term" value="F:methionyl-tRNA formyltransferase activity"/>
    <property type="evidence" value="ECO:0007669"/>
    <property type="project" value="UniProtKB-UniRule"/>
</dbReference>
<dbReference type="CDD" id="cd08646">
    <property type="entry name" value="FMT_core_Met-tRNA-FMT_N"/>
    <property type="match status" value="1"/>
</dbReference>
<dbReference type="CDD" id="cd08704">
    <property type="entry name" value="Met_tRNA_FMT_C"/>
    <property type="match status" value="1"/>
</dbReference>
<dbReference type="FunFam" id="3.40.50.12230:FF:000001">
    <property type="entry name" value="Methionyl-tRNA formyltransferase"/>
    <property type="match status" value="1"/>
</dbReference>
<dbReference type="Gene3D" id="3.40.50.12230">
    <property type="match status" value="1"/>
</dbReference>
<dbReference type="HAMAP" id="MF_00182">
    <property type="entry name" value="Formyl_trans"/>
    <property type="match status" value="1"/>
</dbReference>
<dbReference type="InterPro" id="IPR005794">
    <property type="entry name" value="Fmt"/>
</dbReference>
<dbReference type="InterPro" id="IPR005793">
    <property type="entry name" value="Formyl_trans_C"/>
</dbReference>
<dbReference type="InterPro" id="IPR002376">
    <property type="entry name" value="Formyl_transf_N"/>
</dbReference>
<dbReference type="InterPro" id="IPR036477">
    <property type="entry name" value="Formyl_transf_N_sf"/>
</dbReference>
<dbReference type="InterPro" id="IPR011034">
    <property type="entry name" value="Formyl_transferase-like_C_sf"/>
</dbReference>
<dbReference type="InterPro" id="IPR001555">
    <property type="entry name" value="GART_AS"/>
</dbReference>
<dbReference type="InterPro" id="IPR044135">
    <property type="entry name" value="Met-tRNA-FMT_C"/>
</dbReference>
<dbReference type="InterPro" id="IPR041711">
    <property type="entry name" value="Met-tRNA-FMT_N"/>
</dbReference>
<dbReference type="NCBIfam" id="TIGR00460">
    <property type="entry name" value="fmt"/>
    <property type="match status" value="1"/>
</dbReference>
<dbReference type="PANTHER" id="PTHR11138">
    <property type="entry name" value="METHIONYL-TRNA FORMYLTRANSFERASE"/>
    <property type="match status" value="1"/>
</dbReference>
<dbReference type="PANTHER" id="PTHR11138:SF5">
    <property type="entry name" value="METHIONYL-TRNA FORMYLTRANSFERASE, MITOCHONDRIAL"/>
    <property type="match status" value="1"/>
</dbReference>
<dbReference type="Pfam" id="PF02911">
    <property type="entry name" value="Formyl_trans_C"/>
    <property type="match status" value="1"/>
</dbReference>
<dbReference type="Pfam" id="PF00551">
    <property type="entry name" value="Formyl_trans_N"/>
    <property type="match status" value="1"/>
</dbReference>
<dbReference type="SUPFAM" id="SSF50486">
    <property type="entry name" value="FMT C-terminal domain-like"/>
    <property type="match status" value="1"/>
</dbReference>
<dbReference type="SUPFAM" id="SSF53328">
    <property type="entry name" value="Formyltransferase"/>
    <property type="match status" value="1"/>
</dbReference>
<dbReference type="PROSITE" id="PS00373">
    <property type="entry name" value="GART"/>
    <property type="match status" value="1"/>
</dbReference>
<gene>
    <name evidence="1" type="primary">fmt</name>
    <name type="ordered locus">EUBREC_2345</name>
</gene>
<proteinExistence type="inferred from homology"/>
<evidence type="ECO:0000255" key="1">
    <source>
        <dbReference type="HAMAP-Rule" id="MF_00182"/>
    </source>
</evidence>
<organism>
    <name type="scientific">Agathobacter rectalis (strain ATCC 33656 / DSM 3377 / JCM 17463 / KCTC 5835 / VPI 0990)</name>
    <name type="common">Eubacterium rectale</name>
    <dbReference type="NCBI Taxonomy" id="515619"/>
    <lineage>
        <taxon>Bacteria</taxon>
        <taxon>Bacillati</taxon>
        <taxon>Bacillota</taxon>
        <taxon>Clostridia</taxon>
        <taxon>Lachnospirales</taxon>
        <taxon>Lachnospiraceae</taxon>
        <taxon>Agathobacter</taxon>
    </lineage>
</organism>
<accession>C4ZEV8</accession>
<name>FMT_AGARV</name>
<keyword id="KW-0648">Protein biosynthesis</keyword>
<keyword id="KW-0808">Transferase</keyword>
<feature type="chain" id="PRO_1000203857" description="Methionyl-tRNA formyltransferase">
    <location>
        <begin position="1"/>
        <end position="310"/>
    </location>
</feature>
<feature type="binding site" evidence="1">
    <location>
        <begin position="109"/>
        <end position="112"/>
    </location>
    <ligand>
        <name>(6S)-5,6,7,8-tetrahydrofolate</name>
        <dbReference type="ChEBI" id="CHEBI:57453"/>
    </ligand>
</feature>